<protein>
    <recommendedName>
        <fullName>SWI5-dependent HO expression protein 2</fullName>
    </recommendedName>
</protein>
<proteinExistence type="inferred from homology"/>
<dbReference type="EMBL" id="CH408051">
    <property type="protein sequence ID" value="EDV12972.1"/>
    <property type="molecule type" value="Genomic_DNA"/>
</dbReference>
<dbReference type="SMR" id="B3LQW9"/>
<dbReference type="HOGENOM" id="CLU_1129832_0_0_1"/>
<dbReference type="OrthoDB" id="13575at4893"/>
<dbReference type="Proteomes" id="UP000008335">
    <property type="component" value="Unassembled WGS sequence"/>
</dbReference>
<dbReference type="GO" id="GO:0005737">
    <property type="term" value="C:cytoplasm"/>
    <property type="evidence" value="ECO:0007669"/>
    <property type="project" value="UniProtKB-SubCell"/>
</dbReference>
<dbReference type="GO" id="GO:0005634">
    <property type="term" value="C:nucleus"/>
    <property type="evidence" value="ECO:0007669"/>
    <property type="project" value="UniProtKB-SubCell"/>
</dbReference>
<dbReference type="GO" id="GO:0003723">
    <property type="term" value="F:RNA binding"/>
    <property type="evidence" value="ECO:0007669"/>
    <property type="project" value="UniProtKB-KW"/>
</dbReference>
<dbReference type="GO" id="GO:0051028">
    <property type="term" value="P:mRNA transport"/>
    <property type="evidence" value="ECO:0007669"/>
    <property type="project" value="UniProtKB-KW"/>
</dbReference>
<dbReference type="FunFam" id="1.20.200.20:FF:000001">
    <property type="entry name" value="SWI5-dependent HO expression protein 2"/>
    <property type="match status" value="1"/>
</dbReference>
<dbReference type="Gene3D" id="1.20.200.20">
    <property type="entry name" value="She2 domain"/>
    <property type="match status" value="1"/>
</dbReference>
<dbReference type="InterPro" id="IPR024261">
    <property type="entry name" value="RNA-bd_She2"/>
</dbReference>
<dbReference type="InterPro" id="IPR036827">
    <property type="entry name" value="She2_dom_sf"/>
</dbReference>
<dbReference type="Pfam" id="PF11435">
    <property type="entry name" value="She2p"/>
    <property type="match status" value="1"/>
</dbReference>
<dbReference type="SUPFAM" id="SSF116942">
    <property type="entry name" value="RNA-binding protein She2p"/>
    <property type="match status" value="1"/>
</dbReference>
<reference key="1">
    <citation type="submission" date="2005-03" db="EMBL/GenBank/DDBJ databases">
        <title>Annotation of the Saccharomyces cerevisiae RM11-1a genome.</title>
        <authorList>
            <consortium name="The Broad Institute Genome Sequencing Platform"/>
            <person name="Birren B.W."/>
            <person name="Lander E.S."/>
            <person name="Galagan J.E."/>
            <person name="Nusbaum C."/>
            <person name="Devon K."/>
            <person name="Cuomo C."/>
            <person name="Jaffe D.B."/>
            <person name="Butler J."/>
            <person name="Alvarez P."/>
            <person name="Gnerre S."/>
            <person name="Grabherr M."/>
            <person name="Kleber M."/>
            <person name="Mauceli E.W."/>
            <person name="Brockman W."/>
            <person name="MacCallum I.A."/>
            <person name="Rounsley S."/>
            <person name="Young S.K."/>
            <person name="LaButti K."/>
            <person name="Pushparaj V."/>
            <person name="DeCaprio D."/>
            <person name="Crawford M."/>
            <person name="Koehrsen M."/>
            <person name="Engels R."/>
            <person name="Montgomery P."/>
            <person name="Pearson M."/>
            <person name="Howarth C."/>
            <person name="Larson L."/>
            <person name="Luoma S."/>
            <person name="White J."/>
            <person name="O'Leary S."/>
            <person name="Kodira C.D."/>
            <person name="Zeng Q."/>
            <person name="Yandava C."/>
            <person name="Alvarado L."/>
            <person name="Pratt S."/>
            <person name="Kruglyak L."/>
        </authorList>
    </citation>
    <scope>NUCLEOTIDE SEQUENCE [LARGE SCALE GENOMIC DNA]</scope>
    <source>
        <strain>RM11-1a</strain>
    </source>
</reference>
<keyword id="KW-0963">Cytoplasm</keyword>
<keyword id="KW-0509">mRNA transport</keyword>
<keyword id="KW-0539">Nucleus</keyword>
<keyword id="KW-0694">RNA-binding</keyword>
<keyword id="KW-0813">Transport</keyword>
<gene>
    <name type="primary">SHE2</name>
    <name type="ORF">SCRG_03894</name>
</gene>
<comment type="function">
    <text evidence="1">RNA-binding protein that binds specific mRNAs including the ASH1 mRNA, coding for a repressor of the HO endonuclease. Part of the mRNA localization machinery that restricts accumulation of certain proteins to the bud and in the daughter cell. Recruits the MYO4-SHE3 complex to the ASH1 mRNA. Also recruits LOC1 and PUF6 to ASH1 mRNA, which are required for translational repression of this mRNA (By similarity).</text>
</comment>
<comment type="subunit">
    <text evidence="1">Homodimer and homotetramer. Interacts with LOC1, MYO4, PUF6, SHE3 and with RNA pol II subunits RPO21, SPT4 and SPT5.</text>
</comment>
<comment type="subcellular location">
    <subcellularLocation>
        <location evidence="2">Cytoplasm</location>
    </subcellularLocation>
    <subcellularLocation>
        <location evidence="2">Nucleus</location>
    </subcellularLocation>
    <text evidence="2">Shuttles between the nucleus and cytoplasm and is exported in an mRNA-dependent manner. The presence in the nucleus is essential for PUF6 and LOC1 to bind the ASH1 mRNA.</text>
</comment>
<comment type="similarity">
    <text evidence="3">Belongs to the SHE2 family.</text>
</comment>
<organism>
    <name type="scientific">Saccharomyces cerevisiae (strain RM11-1a)</name>
    <name type="common">Baker's yeast</name>
    <dbReference type="NCBI Taxonomy" id="285006"/>
    <lineage>
        <taxon>Eukaryota</taxon>
        <taxon>Fungi</taxon>
        <taxon>Dikarya</taxon>
        <taxon>Ascomycota</taxon>
        <taxon>Saccharomycotina</taxon>
        <taxon>Saccharomycetes</taxon>
        <taxon>Saccharomycetales</taxon>
        <taxon>Saccharomycetaceae</taxon>
        <taxon>Saccharomyces</taxon>
    </lineage>
</organism>
<name>SHE2_YEAS1</name>
<sequence length="246" mass="28251">MSKDKDIKVTPGTCELVEQILALLSRYLSSYIHVLNKFISHLRRVATLRFERTTLIKFVKKLRFYNDCVLSYNASEFINEGKNELDPEADSFDKVILPIASMFVKCVETFDLLNYYLTQSLQKEILSKTLNEDLTLTAESILAIDDTYNHFVKFSQWMIESLRIGSNLLDLEVVQFAIKCADEDGTNIGETDNIFLQEILPVNSEEEFQTLSAAWHSILDGKLSALDEEFDVVATKWHDKFGKLKN</sequence>
<feature type="chain" id="PRO_0000408921" description="SWI5-dependent HO expression protein 2">
    <location>
        <begin position="1"/>
        <end position="246"/>
    </location>
</feature>
<feature type="short sequence motif" description="Nuclear localization signal" evidence="1">
    <location>
        <begin position="15"/>
        <end position="23"/>
    </location>
</feature>
<evidence type="ECO:0000250" key="1"/>
<evidence type="ECO:0000250" key="2">
    <source>
        <dbReference type="UniProtKB" id="P36068"/>
    </source>
</evidence>
<evidence type="ECO:0000305" key="3"/>
<accession>B3LQW9</accession>